<accession>P0DE76</accession>
<accession>P58124</accession>
<accession>P66447</accession>
<reference key="1">
    <citation type="journal article" date="2002" name="Proc. Natl. Acad. Sci. U.S.A.">
        <title>Genome sequence of a serotype M3 strain of group A Streptococcus: phage-encoded toxins, the high-virulence phenotype, and clone emergence.</title>
        <authorList>
            <person name="Beres S.B."/>
            <person name="Sylva G.L."/>
            <person name="Barbian K.D."/>
            <person name="Lei B."/>
            <person name="Hoff J.S."/>
            <person name="Mammarella N.D."/>
            <person name="Liu M.-Y."/>
            <person name="Smoot J.C."/>
            <person name="Porcella S.F."/>
            <person name="Parkins L.D."/>
            <person name="Campbell D.S."/>
            <person name="Smith T.M."/>
            <person name="McCormick J.K."/>
            <person name="Leung D.Y.M."/>
            <person name="Schlievert P.M."/>
            <person name="Musser J.M."/>
        </authorList>
    </citation>
    <scope>NUCLEOTIDE SEQUENCE [LARGE SCALE GENOMIC DNA]</scope>
    <source>
        <strain>ATCC BAA-595 / MGAS315</strain>
    </source>
</reference>
<gene>
    <name evidence="1" type="primary">rpsP</name>
    <name type="ordered locus">SpyM3_0567</name>
</gene>
<feature type="chain" id="PRO_0000167260" description="Small ribosomal subunit protein bS16">
    <location>
        <begin position="1"/>
        <end position="90"/>
    </location>
</feature>
<proteinExistence type="inferred from homology"/>
<organism>
    <name type="scientific">Streptococcus pyogenes serotype M3 (strain ATCC BAA-595 / MGAS315)</name>
    <dbReference type="NCBI Taxonomy" id="198466"/>
    <lineage>
        <taxon>Bacteria</taxon>
        <taxon>Bacillati</taxon>
        <taxon>Bacillota</taxon>
        <taxon>Bacilli</taxon>
        <taxon>Lactobacillales</taxon>
        <taxon>Streptococcaceae</taxon>
        <taxon>Streptococcus</taxon>
    </lineage>
</organism>
<comment type="similarity">
    <text evidence="1">Belongs to the bacterial ribosomal protein bS16 family.</text>
</comment>
<protein>
    <recommendedName>
        <fullName evidence="1">Small ribosomal subunit protein bS16</fullName>
    </recommendedName>
    <alternativeName>
        <fullName evidence="2">30S ribosomal protein S16</fullName>
    </alternativeName>
</protein>
<sequence length="90" mass="10252">MAVKIRLTRMGSKKKPFYRINVADSRAPRDGRFIETVGTYNPLVAENQITIKEDRVLEWLSKGAQPSDTVRNILSKAGVMAKFHDQKFSK</sequence>
<evidence type="ECO:0000255" key="1">
    <source>
        <dbReference type="HAMAP-Rule" id="MF_00385"/>
    </source>
</evidence>
<evidence type="ECO:0000305" key="2"/>
<keyword id="KW-0687">Ribonucleoprotein</keyword>
<keyword id="KW-0689">Ribosomal protein</keyword>
<dbReference type="EMBL" id="AE014074">
    <property type="protein sequence ID" value="AAM79174.1"/>
    <property type="molecule type" value="Genomic_DNA"/>
</dbReference>
<dbReference type="RefSeq" id="WP_002985074.1">
    <property type="nucleotide sequence ID" value="NC_004070.1"/>
</dbReference>
<dbReference type="SMR" id="P0DE76"/>
<dbReference type="KEGG" id="spg:SpyM3_0567"/>
<dbReference type="HOGENOM" id="CLU_100590_5_0_9"/>
<dbReference type="Proteomes" id="UP000000564">
    <property type="component" value="Chromosome"/>
</dbReference>
<dbReference type="GO" id="GO:0005737">
    <property type="term" value="C:cytoplasm"/>
    <property type="evidence" value="ECO:0007669"/>
    <property type="project" value="UniProtKB-ARBA"/>
</dbReference>
<dbReference type="GO" id="GO:0015935">
    <property type="term" value="C:small ribosomal subunit"/>
    <property type="evidence" value="ECO:0007669"/>
    <property type="project" value="TreeGrafter"/>
</dbReference>
<dbReference type="GO" id="GO:0003735">
    <property type="term" value="F:structural constituent of ribosome"/>
    <property type="evidence" value="ECO:0007669"/>
    <property type="project" value="InterPro"/>
</dbReference>
<dbReference type="GO" id="GO:0006412">
    <property type="term" value="P:translation"/>
    <property type="evidence" value="ECO:0007669"/>
    <property type="project" value="UniProtKB-UniRule"/>
</dbReference>
<dbReference type="FunFam" id="3.30.1320.10:FF:000002">
    <property type="entry name" value="30S ribosomal protein S16"/>
    <property type="match status" value="1"/>
</dbReference>
<dbReference type="Gene3D" id="3.30.1320.10">
    <property type="match status" value="1"/>
</dbReference>
<dbReference type="HAMAP" id="MF_00385">
    <property type="entry name" value="Ribosomal_bS16"/>
    <property type="match status" value="1"/>
</dbReference>
<dbReference type="InterPro" id="IPR000307">
    <property type="entry name" value="Ribosomal_bS16"/>
</dbReference>
<dbReference type="InterPro" id="IPR023803">
    <property type="entry name" value="Ribosomal_bS16_dom_sf"/>
</dbReference>
<dbReference type="NCBIfam" id="TIGR00002">
    <property type="entry name" value="S16"/>
    <property type="match status" value="1"/>
</dbReference>
<dbReference type="PANTHER" id="PTHR12919">
    <property type="entry name" value="30S RIBOSOMAL PROTEIN S16"/>
    <property type="match status" value="1"/>
</dbReference>
<dbReference type="PANTHER" id="PTHR12919:SF20">
    <property type="entry name" value="SMALL RIBOSOMAL SUBUNIT PROTEIN BS16M"/>
    <property type="match status" value="1"/>
</dbReference>
<dbReference type="Pfam" id="PF00886">
    <property type="entry name" value="Ribosomal_S16"/>
    <property type="match status" value="1"/>
</dbReference>
<dbReference type="SUPFAM" id="SSF54565">
    <property type="entry name" value="Ribosomal protein S16"/>
    <property type="match status" value="1"/>
</dbReference>
<name>RS16_STRP3</name>